<comment type="function">
    <text evidence="1">Required for the insertion and/or proper folding and/or complex formation of integral membrane proteins into the membrane. Involved in integration of membrane proteins that insert both dependently and independently of the Sec translocase complex, as well as at least some lipoproteins. Aids folding of multispanning membrane proteins.</text>
</comment>
<comment type="subunit">
    <text evidence="1">Interacts with the Sec translocase complex via SecD. Specifically interacts with transmembrane segments of nascent integral membrane proteins during membrane integration.</text>
</comment>
<comment type="subcellular location">
    <subcellularLocation>
        <location evidence="1">Cell inner membrane</location>
        <topology evidence="1">Multi-pass membrane protein</topology>
    </subcellularLocation>
</comment>
<comment type="similarity">
    <text evidence="1">Belongs to the OXA1/ALB3/YidC family. Type 1 subfamily.</text>
</comment>
<proteinExistence type="inferred from homology"/>
<protein>
    <recommendedName>
        <fullName evidence="1">Membrane protein insertase YidC</fullName>
    </recommendedName>
    <alternativeName>
        <fullName evidence="1">Foldase YidC</fullName>
    </alternativeName>
    <alternativeName>
        <fullName evidence="1">Membrane integrase YidC</fullName>
    </alternativeName>
    <alternativeName>
        <fullName evidence="1">Membrane protein YidC</fullName>
    </alternativeName>
</protein>
<feature type="chain" id="PRO_1000187716" description="Membrane protein insertase YidC">
    <location>
        <begin position="1"/>
        <end position="574"/>
    </location>
</feature>
<feature type="transmembrane region" description="Helical" evidence="1">
    <location>
        <begin position="6"/>
        <end position="26"/>
    </location>
</feature>
<feature type="transmembrane region" description="Helical" evidence="1">
    <location>
        <begin position="350"/>
        <end position="370"/>
    </location>
</feature>
<feature type="transmembrane region" description="Helical" evidence="1">
    <location>
        <begin position="376"/>
        <end position="396"/>
    </location>
</feature>
<feature type="transmembrane region" description="Helical" evidence="1">
    <location>
        <begin position="447"/>
        <end position="467"/>
    </location>
</feature>
<feature type="transmembrane region" description="Helical" evidence="1">
    <location>
        <begin position="491"/>
        <end position="511"/>
    </location>
</feature>
<feature type="transmembrane region" description="Helical" evidence="1">
    <location>
        <begin position="525"/>
        <end position="545"/>
    </location>
</feature>
<feature type="region of interest" description="Disordered" evidence="2">
    <location>
        <begin position="65"/>
        <end position="85"/>
    </location>
</feature>
<organism>
    <name type="scientific">Xanthomonas oryzae pv. oryzae (strain PXO99A)</name>
    <dbReference type="NCBI Taxonomy" id="360094"/>
    <lineage>
        <taxon>Bacteria</taxon>
        <taxon>Pseudomonadati</taxon>
        <taxon>Pseudomonadota</taxon>
        <taxon>Gammaproteobacteria</taxon>
        <taxon>Lysobacterales</taxon>
        <taxon>Lysobacteraceae</taxon>
        <taxon>Xanthomonas</taxon>
    </lineage>
</organism>
<name>YIDC_XANOP</name>
<reference key="1">
    <citation type="journal article" date="2008" name="BMC Genomics">
        <title>Genome sequence and rapid evolution of the rice pathogen Xanthomonas oryzae pv. oryzae PXO99A.</title>
        <authorList>
            <person name="Salzberg S.L."/>
            <person name="Sommer D.D."/>
            <person name="Schatz M.C."/>
            <person name="Phillippy A.M."/>
            <person name="Rabinowicz P.D."/>
            <person name="Tsuge S."/>
            <person name="Furutani A."/>
            <person name="Ochiai H."/>
            <person name="Delcher A.L."/>
            <person name="Kelley D."/>
            <person name="Madupu R."/>
            <person name="Puiu D."/>
            <person name="Radune D."/>
            <person name="Shumway M."/>
            <person name="Trapnell C."/>
            <person name="Aparna G."/>
            <person name="Jha G."/>
            <person name="Pandey A."/>
            <person name="Patil P.B."/>
            <person name="Ishihara H."/>
            <person name="Meyer D.F."/>
            <person name="Szurek B."/>
            <person name="Verdier V."/>
            <person name="Koebnik R."/>
            <person name="Dow J.M."/>
            <person name="Ryan R.P."/>
            <person name="Hirata H."/>
            <person name="Tsuyumu S."/>
            <person name="Won Lee S."/>
            <person name="Seo Y.-S."/>
            <person name="Sriariyanum M."/>
            <person name="Ronald P.C."/>
            <person name="Sonti R.V."/>
            <person name="Van Sluys M.-A."/>
            <person name="Leach J.E."/>
            <person name="White F.F."/>
            <person name="Bogdanove A.J."/>
        </authorList>
    </citation>
    <scope>NUCLEOTIDE SEQUENCE [LARGE SCALE GENOMIC DNA]</scope>
    <source>
        <strain>PXO99A</strain>
    </source>
</reference>
<gene>
    <name evidence="1" type="primary">yidC</name>
    <name type="ordered locus">PXO_03487</name>
</gene>
<evidence type="ECO:0000255" key="1">
    <source>
        <dbReference type="HAMAP-Rule" id="MF_01810"/>
    </source>
</evidence>
<evidence type="ECO:0000256" key="2">
    <source>
        <dbReference type="SAM" id="MobiDB-lite"/>
    </source>
</evidence>
<keyword id="KW-0997">Cell inner membrane</keyword>
<keyword id="KW-1003">Cell membrane</keyword>
<keyword id="KW-0143">Chaperone</keyword>
<keyword id="KW-0472">Membrane</keyword>
<keyword id="KW-0653">Protein transport</keyword>
<keyword id="KW-0812">Transmembrane</keyword>
<keyword id="KW-1133">Transmembrane helix</keyword>
<keyword id="KW-0813">Transport</keyword>
<sequence>MNQTRVFLIFAWLMVAALLWMEWGKEKAAANAPGAAATQSVPAARDLDAATPSAANVPAAQAIPQAGAPGKVPATSTTTATPAAAGTAPVVTLTSDVLRLKLDGRSVLDAELLQFPQTKDGTAPVSLLTEDAAHPYNATSGWASEHSPVPGVGGFRAEQPGTTFELAKGQNTLVVPFVWNGPNGVSIRRTFTLERGRYAISIKDEVINKSAAPWNGYVFRKLSRVPTILSRGMTNPDSFSFNGATWYSPQAGYERRAFKDYMDDGGLNRQITGGWIALLQHHFFTAWIPQNDQASLYVLNKDGPRDVAELRGPAFTVAPGQTATTEARLWVGPKLVSLIAKEDVKGLDRVIDYSRFSIMAIIGQGLFWVLSHLHSFLHNWGWAIVGLVVLLRLVLYPLSSAQYKSSAKMRKFQPRLAQLKERYGDDRVKYQQATMELFKKEKINPMGGCLPLLIQMPIFFALYWVLVESVELRQAPWLGWIQDLTARDPHFILPALNIAIMWATQKLTPTPGIDPMQAKMMQFMPLVFGAMMAFVPSGLVLYWVVNGGLNLLIQWWMIRQHGEKPSKIIRANAK</sequence>
<accession>B2SUW0</accession>
<dbReference type="EMBL" id="CP000967">
    <property type="protein sequence ID" value="ACD61653.1"/>
    <property type="molecule type" value="Genomic_DNA"/>
</dbReference>
<dbReference type="RefSeq" id="WP_012446489.1">
    <property type="nucleotide sequence ID" value="NC_010717.2"/>
</dbReference>
<dbReference type="SMR" id="B2SUW0"/>
<dbReference type="KEGG" id="xop:PXO_03487"/>
<dbReference type="eggNOG" id="COG0706">
    <property type="taxonomic scope" value="Bacteria"/>
</dbReference>
<dbReference type="HOGENOM" id="CLU_016535_3_0_6"/>
<dbReference type="Proteomes" id="UP000001740">
    <property type="component" value="Chromosome"/>
</dbReference>
<dbReference type="GO" id="GO:0005886">
    <property type="term" value="C:plasma membrane"/>
    <property type="evidence" value="ECO:0007669"/>
    <property type="project" value="UniProtKB-SubCell"/>
</dbReference>
<dbReference type="GO" id="GO:0032977">
    <property type="term" value="F:membrane insertase activity"/>
    <property type="evidence" value="ECO:0007669"/>
    <property type="project" value="InterPro"/>
</dbReference>
<dbReference type="GO" id="GO:0051205">
    <property type="term" value="P:protein insertion into membrane"/>
    <property type="evidence" value="ECO:0007669"/>
    <property type="project" value="TreeGrafter"/>
</dbReference>
<dbReference type="GO" id="GO:0015031">
    <property type="term" value="P:protein transport"/>
    <property type="evidence" value="ECO:0007669"/>
    <property type="project" value="UniProtKB-KW"/>
</dbReference>
<dbReference type="CDD" id="cd20070">
    <property type="entry name" value="5TM_YidC_Alb3"/>
    <property type="match status" value="1"/>
</dbReference>
<dbReference type="CDD" id="cd19961">
    <property type="entry name" value="EcYidC-like_peri"/>
    <property type="match status" value="1"/>
</dbReference>
<dbReference type="FunFam" id="2.70.98.90:FF:000002">
    <property type="entry name" value="Membrane protein insertase YidC"/>
    <property type="match status" value="1"/>
</dbReference>
<dbReference type="Gene3D" id="2.70.98.90">
    <property type="match status" value="1"/>
</dbReference>
<dbReference type="HAMAP" id="MF_01810">
    <property type="entry name" value="YidC_type1"/>
    <property type="match status" value="1"/>
</dbReference>
<dbReference type="InterPro" id="IPR019998">
    <property type="entry name" value="Membr_insert_YidC"/>
</dbReference>
<dbReference type="InterPro" id="IPR028053">
    <property type="entry name" value="Membr_insert_YidC_N"/>
</dbReference>
<dbReference type="InterPro" id="IPR001708">
    <property type="entry name" value="YidC/ALB3/OXA1/COX18"/>
</dbReference>
<dbReference type="InterPro" id="IPR028055">
    <property type="entry name" value="YidC/Oxa/ALB_C"/>
</dbReference>
<dbReference type="InterPro" id="IPR047196">
    <property type="entry name" value="YidC_ALB_C"/>
</dbReference>
<dbReference type="InterPro" id="IPR038221">
    <property type="entry name" value="YidC_periplasmic_sf"/>
</dbReference>
<dbReference type="NCBIfam" id="NF002352">
    <property type="entry name" value="PRK01318.1-3"/>
    <property type="match status" value="1"/>
</dbReference>
<dbReference type="NCBIfam" id="TIGR03593">
    <property type="entry name" value="yidC_nterm"/>
    <property type="match status" value="1"/>
</dbReference>
<dbReference type="NCBIfam" id="TIGR03592">
    <property type="entry name" value="yidC_oxa1_cterm"/>
    <property type="match status" value="1"/>
</dbReference>
<dbReference type="PANTHER" id="PTHR12428:SF65">
    <property type="entry name" value="CYTOCHROME C OXIDASE ASSEMBLY PROTEIN COX18, MITOCHONDRIAL"/>
    <property type="match status" value="1"/>
</dbReference>
<dbReference type="PANTHER" id="PTHR12428">
    <property type="entry name" value="OXA1"/>
    <property type="match status" value="1"/>
</dbReference>
<dbReference type="Pfam" id="PF02096">
    <property type="entry name" value="60KD_IMP"/>
    <property type="match status" value="1"/>
</dbReference>
<dbReference type="Pfam" id="PF14849">
    <property type="entry name" value="YidC_periplas"/>
    <property type="match status" value="1"/>
</dbReference>
<dbReference type="PRINTS" id="PR00701">
    <property type="entry name" value="60KDINNERMP"/>
</dbReference>
<dbReference type="PRINTS" id="PR01900">
    <property type="entry name" value="YIDCPROTEIN"/>
</dbReference>